<comment type="function">
    <text evidence="1">Activates expression of the rhaSR operon in response to L-rhamnose.</text>
</comment>
<comment type="subunit">
    <text evidence="1">Binds DNA as a dimer.</text>
</comment>
<comment type="subcellular location">
    <subcellularLocation>
        <location evidence="1">Cytoplasm</location>
    </subcellularLocation>
</comment>
<accession>A7FN79</accession>
<protein>
    <recommendedName>
        <fullName evidence="1">HTH-type transcriptional activator RhaR</fullName>
    </recommendedName>
    <alternativeName>
        <fullName evidence="1">L-rhamnose operon transcriptional activator RhaR</fullName>
    </alternativeName>
</protein>
<name>RHAR_YERP3</name>
<reference key="1">
    <citation type="journal article" date="2007" name="PLoS Genet.">
        <title>The complete genome sequence of Yersinia pseudotuberculosis IP31758, the causative agent of Far East scarlet-like fever.</title>
        <authorList>
            <person name="Eppinger M."/>
            <person name="Rosovitz M.J."/>
            <person name="Fricke W.F."/>
            <person name="Rasko D.A."/>
            <person name="Kokorina G."/>
            <person name="Fayolle C."/>
            <person name="Lindler L.E."/>
            <person name="Carniel E."/>
            <person name="Ravel J."/>
        </authorList>
    </citation>
    <scope>NUCLEOTIDE SEQUENCE [LARGE SCALE GENOMIC DNA]</scope>
    <source>
        <strain>IP 31758</strain>
    </source>
</reference>
<evidence type="ECO:0000255" key="1">
    <source>
        <dbReference type="HAMAP-Rule" id="MF_01533"/>
    </source>
</evidence>
<dbReference type="EMBL" id="CP000720">
    <property type="protein sequence ID" value="ABS49192.1"/>
    <property type="molecule type" value="Genomic_DNA"/>
</dbReference>
<dbReference type="RefSeq" id="WP_011191603.1">
    <property type="nucleotide sequence ID" value="NC_009708.1"/>
</dbReference>
<dbReference type="SMR" id="A7FN79"/>
<dbReference type="KEGG" id="ypi:YpsIP31758_3753"/>
<dbReference type="HOGENOM" id="CLU_000445_88_5_6"/>
<dbReference type="Proteomes" id="UP000002412">
    <property type="component" value="Chromosome"/>
</dbReference>
<dbReference type="GO" id="GO:0005737">
    <property type="term" value="C:cytoplasm"/>
    <property type="evidence" value="ECO:0007669"/>
    <property type="project" value="UniProtKB-SubCell"/>
</dbReference>
<dbReference type="GO" id="GO:0003700">
    <property type="term" value="F:DNA-binding transcription factor activity"/>
    <property type="evidence" value="ECO:0007669"/>
    <property type="project" value="UniProtKB-UniRule"/>
</dbReference>
<dbReference type="GO" id="GO:0043565">
    <property type="term" value="F:sequence-specific DNA binding"/>
    <property type="evidence" value="ECO:0007669"/>
    <property type="project" value="InterPro"/>
</dbReference>
<dbReference type="GO" id="GO:0045893">
    <property type="term" value="P:positive regulation of DNA-templated transcription"/>
    <property type="evidence" value="ECO:0007669"/>
    <property type="project" value="UniProtKB-UniRule"/>
</dbReference>
<dbReference type="GO" id="GO:0019299">
    <property type="term" value="P:rhamnose metabolic process"/>
    <property type="evidence" value="ECO:0007669"/>
    <property type="project" value="UniProtKB-UniRule"/>
</dbReference>
<dbReference type="CDD" id="cd06977">
    <property type="entry name" value="cupin_RhaR_RhaS-like_N"/>
    <property type="match status" value="1"/>
</dbReference>
<dbReference type="Gene3D" id="1.10.10.60">
    <property type="entry name" value="Homeodomain-like"/>
    <property type="match status" value="1"/>
</dbReference>
<dbReference type="Gene3D" id="2.60.120.10">
    <property type="entry name" value="Jelly Rolls"/>
    <property type="match status" value="1"/>
</dbReference>
<dbReference type="HAMAP" id="MF_01533">
    <property type="entry name" value="HTH_type_RhaR"/>
    <property type="match status" value="1"/>
</dbReference>
<dbReference type="InterPro" id="IPR003313">
    <property type="entry name" value="AraC-bd"/>
</dbReference>
<dbReference type="InterPro" id="IPR009057">
    <property type="entry name" value="Homeodomain-like_sf"/>
</dbReference>
<dbReference type="InterPro" id="IPR018060">
    <property type="entry name" value="HTH_AraC"/>
</dbReference>
<dbReference type="InterPro" id="IPR018062">
    <property type="entry name" value="HTH_AraC-typ_CS"/>
</dbReference>
<dbReference type="InterPro" id="IPR047220">
    <property type="entry name" value="RhaR_RhaS-like_N"/>
</dbReference>
<dbReference type="InterPro" id="IPR014710">
    <property type="entry name" value="RmlC-like_jellyroll"/>
</dbReference>
<dbReference type="InterPro" id="IPR011051">
    <property type="entry name" value="RmlC_Cupin_sf"/>
</dbReference>
<dbReference type="InterPro" id="IPR023699">
    <property type="entry name" value="Tscrpt_act_RhaR"/>
</dbReference>
<dbReference type="InterPro" id="IPR020449">
    <property type="entry name" value="Tscrpt_reg_AraC-type_HTH"/>
</dbReference>
<dbReference type="NCBIfam" id="NF010026">
    <property type="entry name" value="PRK13501.1"/>
    <property type="match status" value="1"/>
</dbReference>
<dbReference type="PANTHER" id="PTHR43280">
    <property type="entry name" value="ARAC-FAMILY TRANSCRIPTIONAL REGULATOR"/>
    <property type="match status" value="1"/>
</dbReference>
<dbReference type="PANTHER" id="PTHR43280:SF13">
    <property type="entry name" value="HTH-TYPE TRANSCRIPTIONAL ACTIVATOR RHAR"/>
    <property type="match status" value="1"/>
</dbReference>
<dbReference type="Pfam" id="PF02311">
    <property type="entry name" value="AraC_binding"/>
    <property type="match status" value="1"/>
</dbReference>
<dbReference type="Pfam" id="PF12833">
    <property type="entry name" value="HTH_18"/>
    <property type="match status" value="1"/>
</dbReference>
<dbReference type="PRINTS" id="PR00032">
    <property type="entry name" value="HTHARAC"/>
</dbReference>
<dbReference type="SMART" id="SM00342">
    <property type="entry name" value="HTH_ARAC"/>
    <property type="match status" value="1"/>
</dbReference>
<dbReference type="SUPFAM" id="SSF46689">
    <property type="entry name" value="Homeodomain-like"/>
    <property type="match status" value="1"/>
</dbReference>
<dbReference type="SUPFAM" id="SSF51182">
    <property type="entry name" value="RmlC-like cupins"/>
    <property type="match status" value="1"/>
</dbReference>
<dbReference type="PROSITE" id="PS00041">
    <property type="entry name" value="HTH_ARAC_FAMILY_1"/>
    <property type="match status" value="1"/>
</dbReference>
<dbReference type="PROSITE" id="PS01124">
    <property type="entry name" value="HTH_ARAC_FAMILY_2"/>
    <property type="match status" value="1"/>
</dbReference>
<proteinExistence type="inferred from homology"/>
<sequence>MRAPLLLESRDYLLSEQMPVAVTNRYPQETFVEHTHQFCEIVIVWRGNGLHVLNDHPYRITCGDVFYIQAADHHSYESVHDLVLDNIIYCPERLHLNAQWHKLLPPLGPEQNQGYWRLTTQGMAQARPIIQQLAQESRKTDSWSIQLTEVLLLQLAIVLKRHRYRAEHAHLLPDGEQLDLIMSALQQSLGAYFDMADFCHKNQLVERSLKQLFRQQTGMSISHYLRQIRLCHAKCLLRGSEHRISDIAARCGFEDSNYFSAVFTREAGMTPRDYRQRFIRSPVLPAKNEP</sequence>
<organism>
    <name type="scientific">Yersinia pseudotuberculosis serotype O:1b (strain IP 31758)</name>
    <dbReference type="NCBI Taxonomy" id="349747"/>
    <lineage>
        <taxon>Bacteria</taxon>
        <taxon>Pseudomonadati</taxon>
        <taxon>Pseudomonadota</taxon>
        <taxon>Gammaproteobacteria</taxon>
        <taxon>Enterobacterales</taxon>
        <taxon>Yersiniaceae</taxon>
        <taxon>Yersinia</taxon>
    </lineage>
</organism>
<gene>
    <name evidence="1" type="primary">rhaR</name>
    <name type="ordered locus">YpsIP31758_3753</name>
</gene>
<feature type="chain" id="PRO_1000068697" description="HTH-type transcriptional activator RhaR">
    <location>
        <begin position="1"/>
        <end position="290"/>
    </location>
</feature>
<feature type="domain" description="HTH araC/xylS-type" evidence="1">
    <location>
        <begin position="179"/>
        <end position="277"/>
    </location>
</feature>
<feature type="DNA-binding region" description="H-T-H motif" evidence="1">
    <location>
        <begin position="196"/>
        <end position="217"/>
    </location>
</feature>
<feature type="DNA-binding region" description="H-T-H motif" evidence="1">
    <location>
        <begin position="244"/>
        <end position="267"/>
    </location>
</feature>
<feature type="site" description="Interaction with sigma-70" evidence="1">
    <location>
        <position position="246"/>
    </location>
</feature>
<keyword id="KW-0010">Activator</keyword>
<keyword id="KW-0963">Cytoplasm</keyword>
<keyword id="KW-0238">DNA-binding</keyword>
<keyword id="KW-0677">Repeat</keyword>
<keyword id="KW-0684">Rhamnose metabolism</keyword>
<keyword id="KW-0804">Transcription</keyword>
<keyword id="KW-0805">Transcription regulation</keyword>